<feature type="chain" id="PRO_0000151661" description="Probable arginine--tRNA ligase, cytoplasmic">
    <location>
        <begin position="1"/>
        <end position="713"/>
    </location>
</feature>
<feature type="region of interest" description="Disordered" evidence="3">
    <location>
        <begin position="74"/>
        <end position="113"/>
    </location>
</feature>
<feature type="region of interest" description="Interaction with tRNA" evidence="2">
    <location>
        <begin position="583"/>
        <end position="597"/>
    </location>
</feature>
<feature type="short sequence motif" description="'HIGH' region">
    <location>
        <begin position="252"/>
        <end position="263"/>
    </location>
</feature>
<feature type="compositionally biased region" description="Low complexity" evidence="3">
    <location>
        <begin position="81"/>
        <end position="95"/>
    </location>
</feature>
<feature type="compositionally biased region" description="Basic and acidic residues" evidence="3">
    <location>
        <begin position="96"/>
        <end position="105"/>
    </location>
</feature>
<feature type="binding site" evidence="1">
    <location>
        <begin position="252"/>
        <end position="254"/>
    </location>
    <ligand>
        <name>L-arginine</name>
        <dbReference type="ChEBI" id="CHEBI:32682"/>
    </ligand>
</feature>
<feature type="binding site" evidence="1">
    <location>
        <position position="263"/>
    </location>
    <ligand>
        <name>L-arginine</name>
        <dbReference type="ChEBI" id="CHEBI:32682"/>
    </ligand>
</feature>
<feature type="binding site" evidence="1">
    <location>
        <position position="438"/>
    </location>
    <ligand>
        <name>L-arginine</name>
        <dbReference type="ChEBI" id="CHEBI:32682"/>
    </ligand>
</feature>
<feature type="binding site" evidence="1">
    <location>
        <position position="442"/>
    </location>
    <ligand>
        <name>L-arginine</name>
        <dbReference type="ChEBI" id="CHEBI:32682"/>
    </ligand>
</feature>
<feature type="binding site" evidence="1">
    <location>
        <position position="466"/>
    </location>
    <ligand>
        <name>L-arginine</name>
        <dbReference type="ChEBI" id="CHEBI:32682"/>
    </ligand>
</feature>
<evidence type="ECO:0000250" key="1">
    <source>
        <dbReference type="UniProtKB" id="P54136"/>
    </source>
</evidence>
<evidence type="ECO:0000250" key="2">
    <source>
        <dbReference type="UniProtKB" id="Q05506"/>
    </source>
</evidence>
<evidence type="ECO:0000256" key="3">
    <source>
        <dbReference type="SAM" id="MobiDB-lite"/>
    </source>
</evidence>
<evidence type="ECO:0000305" key="4"/>
<evidence type="ECO:0000312" key="5">
    <source>
        <dbReference type="WormBase" id="F26F4.10a"/>
    </source>
</evidence>
<keyword id="KW-0030">Aminoacyl-tRNA synthetase</keyword>
<keyword id="KW-0067">ATP-binding</keyword>
<keyword id="KW-0963">Cytoplasm</keyword>
<keyword id="KW-0436">Ligase</keyword>
<keyword id="KW-0547">Nucleotide-binding</keyword>
<keyword id="KW-0648">Protein biosynthesis</keyword>
<keyword id="KW-1185">Reference proteome</keyword>
<reference key="1">
    <citation type="journal article" date="1998" name="Science">
        <title>Genome sequence of the nematode C. elegans: a platform for investigating biology.</title>
        <authorList>
            <consortium name="The C. elegans sequencing consortium"/>
        </authorList>
    </citation>
    <scope>NUCLEOTIDE SEQUENCE [LARGE SCALE GENOMIC DNA]</scope>
    <source>
        <strain>Bristol N2</strain>
    </source>
</reference>
<sequence length="713" mass="80896">MSANKELQQGYSDYSAASDQAALLNRLITAMQKGELTDELLEHIPELGDAKKLNDKLKYRKSILEKSIAEQAAKNKKNGVKATSTSSPSSSTSAPAEKKAKKDGKTGGAPPKQAKKVDYVTVEDYGSSIFGRLQSLFKKAIEDAFPGLDVPLLLAETPNPQFGDYQCNSAMPIAAKLKANKINKRPGDVAKEIQAKLPTKIDFVEKIDVMPAGFINIFLNTDYLRRQISLLASEGVKLPKLTRKRVLVDFSSPNIAKEMHVGHLRSTIIGDSICRLFEAVGFDVLRVNHIGDWGTQFGMLIAHLYDRFPDFLKKLPDISDLQAFYKESKKRFDEDEQFKKRAYEYVVKLQSHDGDIVKAWNTICDVSKKYNQIVYNYLDIKIKDVGESFYQDKMIELVKWVKTNKPDMLREEDGRQIMFPTGCDIPLTVVKSDGGFTYDTSDLAALKYRMLEEKCDWNIYVVDSGQSLHLETVYAAGRDFGWYDESIQRVEHVAFGLVLGDDKKKFKTRSGETVRLLDLLSEGVKRATEKLIEKGRETAMSEEQLVAARDAVAFGCVKYADLSHTRTQDYVFSFDRMLEDRGNTAVYLLYAYTRIQSIFEKDEVKNVDLVKYIASTPTLPLDHPGEFKLAKQLLKLSDCVLLVLDSLMLHQMCDYVYQLATLFHDFYNECYVIENKEGEKPFVHMHRLALCDVTRKVMSTCFKILGLREVNKM</sequence>
<accession>Q19825</accession>
<proteinExistence type="inferred from homology"/>
<dbReference type="EC" id="6.1.1.19" evidence="1"/>
<dbReference type="EMBL" id="FO080682">
    <property type="protein sequence ID" value="CCD65757.1"/>
    <property type="molecule type" value="Genomic_DNA"/>
</dbReference>
<dbReference type="PIR" id="T16176">
    <property type="entry name" value="T16176"/>
</dbReference>
<dbReference type="RefSeq" id="NP_001022551.1">
    <property type="nucleotide sequence ID" value="NM_001027380.8"/>
</dbReference>
<dbReference type="SMR" id="Q19825"/>
<dbReference type="BioGRID" id="40893">
    <property type="interactions" value="13"/>
</dbReference>
<dbReference type="FunCoup" id="Q19825">
    <property type="interactions" value="2472"/>
</dbReference>
<dbReference type="STRING" id="6239.F26F4.10a.2"/>
<dbReference type="iPTMnet" id="Q19825"/>
<dbReference type="PaxDb" id="6239-F26F4.10a.1"/>
<dbReference type="PeptideAtlas" id="Q19825"/>
<dbReference type="EnsemblMetazoa" id="F26F4.10a.1">
    <property type="protein sequence ID" value="F26F4.10a.1"/>
    <property type="gene ID" value="WBGene00004679"/>
</dbReference>
<dbReference type="EnsemblMetazoa" id="F26F4.10a.2">
    <property type="protein sequence ID" value="F26F4.10a.2"/>
    <property type="gene ID" value="WBGene00004679"/>
</dbReference>
<dbReference type="GeneID" id="175659"/>
<dbReference type="KEGG" id="cel:CELE_F26F4.10"/>
<dbReference type="UCSC" id="F26F4.10b.1">
    <property type="organism name" value="c. elegans"/>
</dbReference>
<dbReference type="AGR" id="WB:WBGene00004679"/>
<dbReference type="CTD" id="175659"/>
<dbReference type="WormBase" id="F26F4.10a">
    <property type="protein sequence ID" value="CE29495"/>
    <property type="gene ID" value="WBGene00004679"/>
    <property type="gene designation" value="rars-1"/>
</dbReference>
<dbReference type="eggNOG" id="KOG4426">
    <property type="taxonomic scope" value="Eukaryota"/>
</dbReference>
<dbReference type="InParanoid" id="Q19825"/>
<dbReference type="OMA" id="NKPLHLG"/>
<dbReference type="OrthoDB" id="68056at2759"/>
<dbReference type="PhylomeDB" id="Q19825"/>
<dbReference type="BRENDA" id="6.1.1.19">
    <property type="organism ID" value="1045"/>
</dbReference>
<dbReference type="SignaLink" id="Q19825"/>
<dbReference type="PRO" id="PR:Q19825"/>
<dbReference type="Proteomes" id="UP000001940">
    <property type="component" value="Chromosome III"/>
</dbReference>
<dbReference type="Bgee" id="WBGene00004679">
    <property type="expression patterns" value="Expressed in germ line (C elegans) and 4 other cell types or tissues"/>
</dbReference>
<dbReference type="ExpressionAtlas" id="Q19825">
    <property type="expression patterns" value="baseline and differential"/>
</dbReference>
<dbReference type="GO" id="GO:0005829">
    <property type="term" value="C:cytosol"/>
    <property type="evidence" value="ECO:0007669"/>
    <property type="project" value="UniProtKB-SubCell"/>
</dbReference>
<dbReference type="GO" id="GO:0004814">
    <property type="term" value="F:arginine-tRNA ligase activity"/>
    <property type="evidence" value="ECO:0000318"/>
    <property type="project" value="GO_Central"/>
</dbReference>
<dbReference type="GO" id="GO:0005524">
    <property type="term" value="F:ATP binding"/>
    <property type="evidence" value="ECO:0007669"/>
    <property type="project" value="UniProtKB-KW"/>
</dbReference>
<dbReference type="GO" id="GO:0006420">
    <property type="term" value="P:arginyl-tRNA aminoacylation"/>
    <property type="evidence" value="ECO:0000318"/>
    <property type="project" value="GO_Central"/>
</dbReference>
<dbReference type="GO" id="GO:0008340">
    <property type="term" value="P:determination of adult lifespan"/>
    <property type="evidence" value="ECO:0000315"/>
    <property type="project" value="UniProtKB"/>
</dbReference>
<dbReference type="GO" id="GO:0010629">
    <property type="term" value="P:negative regulation of gene expression"/>
    <property type="evidence" value="ECO:0000315"/>
    <property type="project" value="UniProtKB"/>
</dbReference>
<dbReference type="GO" id="GO:0010628">
    <property type="term" value="P:positive regulation of gene expression"/>
    <property type="evidence" value="ECO:0000315"/>
    <property type="project" value="UniProtKB"/>
</dbReference>
<dbReference type="GO" id="GO:0006412">
    <property type="term" value="P:translation"/>
    <property type="evidence" value="ECO:0000315"/>
    <property type="project" value="UniProtKB"/>
</dbReference>
<dbReference type="CDD" id="cd00671">
    <property type="entry name" value="ArgRS_core"/>
    <property type="match status" value="1"/>
</dbReference>
<dbReference type="FunFam" id="3.30.1360.70:FF:000002">
    <property type="entry name" value="arginine--tRNA ligase, cytoplasmic"/>
    <property type="match status" value="1"/>
</dbReference>
<dbReference type="FunFam" id="1.10.730.10:FF:000064">
    <property type="entry name" value="Probable arginine--tRNA ligase, cytoplasmic"/>
    <property type="match status" value="1"/>
</dbReference>
<dbReference type="FunFam" id="3.40.50.620:FF:000359">
    <property type="entry name" value="Probable arginine--tRNA ligase, cytoplasmic"/>
    <property type="match status" value="1"/>
</dbReference>
<dbReference type="Gene3D" id="3.30.1360.70">
    <property type="entry name" value="Arginyl tRNA synthetase N-terminal domain"/>
    <property type="match status" value="1"/>
</dbReference>
<dbReference type="Gene3D" id="3.40.50.620">
    <property type="entry name" value="HUPs"/>
    <property type="match status" value="1"/>
</dbReference>
<dbReference type="Gene3D" id="1.10.730.10">
    <property type="entry name" value="Isoleucyl-tRNA Synthetase, Domain 1"/>
    <property type="match status" value="1"/>
</dbReference>
<dbReference type="HAMAP" id="MF_00123">
    <property type="entry name" value="Arg_tRNA_synth"/>
    <property type="match status" value="1"/>
</dbReference>
<dbReference type="InterPro" id="IPR001412">
    <property type="entry name" value="aa-tRNA-synth_I_CS"/>
</dbReference>
<dbReference type="InterPro" id="IPR001278">
    <property type="entry name" value="Arg-tRNA-ligase"/>
</dbReference>
<dbReference type="InterPro" id="IPR005148">
    <property type="entry name" value="Arg-tRNA-synth_N"/>
</dbReference>
<dbReference type="InterPro" id="IPR036695">
    <property type="entry name" value="Arg-tRNA-synth_N_sf"/>
</dbReference>
<dbReference type="InterPro" id="IPR035684">
    <property type="entry name" value="ArgRS_core"/>
</dbReference>
<dbReference type="InterPro" id="IPR008909">
    <property type="entry name" value="DALR_anticod-bd"/>
</dbReference>
<dbReference type="InterPro" id="IPR014729">
    <property type="entry name" value="Rossmann-like_a/b/a_fold"/>
</dbReference>
<dbReference type="InterPro" id="IPR009080">
    <property type="entry name" value="tRNAsynth_Ia_anticodon-bd"/>
</dbReference>
<dbReference type="NCBIfam" id="TIGR00456">
    <property type="entry name" value="argS"/>
    <property type="match status" value="1"/>
</dbReference>
<dbReference type="PANTHER" id="PTHR11956:SF5">
    <property type="entry name" value="ARGININE--TRNA LIGASE, CYTOPLASMIC"/>
    <property type="match status" value="1"/>
</dbReference>
<dbReference type="PANTHER" id="PTHR11956">
    <property type="entry name" value="ARGINYL-TRNA SYNTHETASE"/>
    <property type="match status" value="1"/>
</dbReference>
<dbReference type="Pfam" id="PF03485">
    <property type="entry name" value="Arg_tRNA_synt_N"/>
    <property type="match status" value="1"/>
</dbReference>
<dbReference type="Pfam" id="PF05746">
    <property type="entry name" value="DALR_1"/>
    <property type="match status" value="1"/>
</dbReference>
<dbReference type="Pfam" id="PF00750">
    <property type="entry name" value="tRNA-synt_1d"/>
    <property type="match status" value="1"/>
</dbReference>
<dbReference type="PRINTS" id="PR01038">
    <property type="entry name" value="TRNASYNTHARG"/>
</dbReference>
<dbReference type="SMART" id="SM01016">
    <property type="entry name" value="Arg_tRNA_synt_N"/>
    <property type="match status" value="1"/>
</dbReference>
<dbReference type="SMART" id="SM00836">
    <property type="entry name" value="DALR_1"/>
    <property type="match status" value="1"/>
</dbReference>
<dbReference type="SUPFAM" id="SSF47323">
    <property type="entry name" value="Anticodon-binding domain of a subclass of class I aminoacyl-tRNA synthetases"/>
    <property type="match status" value="1"/>
</dbReference>
<dbReference type="SUPFAM" id="SSF55190">
    <property type="entry name" value="Arginyl-tRNA synthetase (ArgRS), N-terminal 'additional' domain"/>
    <property type="match status" value="1"/>
</dbReference>
<dbReference type="SUPFAM" id="SSF52374">
    <property type="entry name" value="Nucleotidylyl transferase"/>
    <property type="match status" value="1"/>
</dbReference>
<dbReference type="PROSITE" id="PS00178">
    <property type="entry name" value="AA_TRNA_LIGASE_I"/>
    <property type="match status" value="1"/>
</dbReference>
<organism>
    <name type="scientific">Caenorhabditis elegans</name>
    <dbReference type="NCBI Taxonomy" id="6239"/>
    <lineage>
        <taxon>Eukaryota</taxon>
        <taxon>Metazoa</taxon>
        <taxon>Ecdysozoa</taxon>
        <taxon>Nematoda</taxon>
        <taxon>Chromadorea</taxon>
        <taxon>Rhabditida</taxon>
        <taxon>Rhabditina</taxon>
        <taxon>Rhabditomorpha</taxon>
        <taxon>Rhabditoidea</taxon>
        <taxon>Rhabditidae</taxon>
        <taxon>Peloderinae</taxon>
        <taxon>Caenorhabditis</taxon>
    </lineage>
</organism>
<protein>
    <recommendedName>
        <fullName>Probable arginine--tRNA ligase, cytoplasmic</fullName>
        <ecNumber evidence="1">6.1.1.19</ecNumber>
    </recommendedName>
    <alternativeName>
        <fullName>Arginyl-tRNA synthetase</fullName>
        <shortName>ArgRS</shortName>
    </alternativeName>
</protein>
<gene>
    <name evidence="5" type="primary">rars-1</name>
    <name evidence="5" type="synonym">rrt-1</name>
    <name evidence="5" type="ORF">F26F4.10</name>
</gene>
<name>SYRC_CAEEL</name>
<comment type="function">
    <text evidence="1">Forms part of a macromolecular complex that catalyzes the attachment of specific amino acids to cognate tRNAs during protein synthesis.</text>
</comment>
<comment type="catalytic activity">
    <reaction evidence="1">
        <text>tRNA(Arg) + L-arginine + ATP = L-arginyl-tRNA(Arg) + AMP + diphosphate</text>
        <dbReference type="Rhea" id="RHEA:20301"/>
        <dbReference type="Rhea" id="RHEA-COMP:9658"/>
        <dbReference type="Rhea" id="RHEA-COMP:9673"/>
        <dbReference type="ChEBI" id="CHEBI:30616"/>
        <dbReference type="ChEBI" id="CHEBI:32682"/>
        <dbReference type="ChEBI" id="CHEBI:33019"/>
        <dbReference type="ChEBI" id="CHEBI:78442"/>
        <dbReference type="ChEBI" id="CHEBI:78513"/>
        <dbReference type="ChEBI" id="CHEBI:456215"/>
        <dbReference type="EC" id="6.1.1.19"/>
    </reaction>
</comment>
<comment type="subcellular location">
    <subcellularLocation>
        <location evidence="1">Cytoplasm</location>
    </subcellularLocation>
    <subcellularLocation>
        <location evidence="1">Cytoplasm</location>
        <location evidence="1">Cytosol</location>
    </subcellularLocation>
</comment>
<comment type="similarity">
    <text evidence="4">Belongs to the class-I aminoacyl-tRNA synthetase family.</text>
</comment>